<accession>C3L777</accession>
<feature type="chain" id="PRO_1000164769" description="Acyl carrier protein">
    <location>
        <begin position="1"/>
        <end position="77"/>
    </location>
</feature>
<feature type="domain" description="Carrier" evidence="2">
    <location>
        <begin position="2"/>
        <end position="77"/>
    </location>
</feature>
<feature type="modified residue" description="O-(pantetheine 4'-phosphoryl)serine" evidence="2">
    <location>
        <position position="37"/>
    </location>
</feature>
<keyword id="KW-0963">Cytoplasm</keyword>
<keyword id="KW-0275">Fatty acid biosynthesis</keyword>
<keyword id="KW-0276">Fatty acid metabolism</keyword>
<keyword id="KW-0444">Lipid biosynthesis</keyword>
<keyword id="KW-0443">Lipid metabolism</keyword>
<keyword id="KW-0596">Phosphopantetheine</keyword>
<keyword id="KW-0597">Phosphoprotein</keyword>
<organism>
    <name type="scientific">Bacillus anthracis (strain CDC 684 / NRRL 3495)</name>
    <dbReference type="NCBI Taxonomy" id="568206"/>
    <lineage>
        <taxon>Bacteria</taxon>
        <taxon>Bacillati</taxon>
        <taxon>Bacillota</taxon>
        <taxon>Bacilli</taxon>
        <taxon>Bacillales</taxon>
        <taxon>Bacillaceae</taxon>
        <taxon>Bacillus</taxon>
        <taxon>Bacillus cereus group</taxon>
    </lineage>
</organism>
<proteinExistence type="inferred from homology"/>
<comment type="function">
    <text evidence="1">Carrier of the growing fatty acid chain in fatty acid biosynthesis.</text>
</comment>
<comment type="pathway">
    <text evidence="1">Lipid metabolism; fatty acid biosynthesis.</text>
</comment>
<comment type="subcellular location">
    <subcellularLocation>
        <location evidence="1">Cytoplasm</location>
    </subcellularLocation>
</comment>
<comment type="PTM">
    <text evidence="1">4'-phosphopantetheine is transferred from CoA to a specific serine of apo-ACP by AcpS. This modification is essential for activity because fatty acids are bound in thioester linkage to the sulfhydryl of the prosthetic group.</text>
</comment>
<comment type="similarity">
    <text evidence="1">Belongs to the acyl carrier protein (ACP) family.</text>
</comment>
<gene>
    <name evidence="1" type="primary">acpP</name>
    <name type="ordered locus">BAMEG_0643</name>
</gene>
<dbReference type="EMBL" id="CP001215">
    <property type="protein sequence ID" value="ACP15522.1"/>
    <property type="molecule type" value="Genomic_DNA"/>
</dbReference>
<dbReference type="RefSeq" id="WP_000786062.1">
    <property type="nucleotide sequence ID" value="NC_012581.1"/>
</dbReference>
<dbReference type="SMR" id="C3L777"/>
<dbReference type="GeneID" id="93007262"/>
<dbReference type="KEGG" id="bah:BAMEG_0643"/>
<dbReference type="HOGENOM" id="CLU_108696_5_3_9"/>
<dbReference type="UniPathway" id="UPA00094"/>
<dbReference type="GO" id="GO:0005829">
    <property type="term" value="C:cytosol"/>
    <property type="evidence" value="ECO:0007669"/>
    <property type="project" value="TreeGrafter"/>
</dbReference>
<dbReference type="GO" id="GO:0016020">
    <property type="term" value="C:membrane"/>
    <property type="evidence" value="ECO:0007669"/>
    <property type="project" value="GOC"/>
</dbReference>
<dbReference type="GO" id="GO:0000035">
    <property type="term" value="F:acyl binding"/>
    <property type="evidence" value="ECO:0007669"/>
    <property type="project" value="TreeGrafter"/>
</dbReference>
<dbReference type="GO" id="GO:0000036">
    <property type="term" value="F:acyl carrier activity"/>
    <property type="evidence" value="ECO:0007669"/>
    <property type="project" value="UniProtKB-UniRule"/>
</dbReference>
<dbReference type="GO" id="GO:0009245">
    <property type="term" value="P:lipid A biosynthetic process"/>
    <property type="evidence" value="ECO:0007669"/>
    <property type="project" value="TreeGrafter"/>
</dbReference>
<dbReference type="FunFam" id="1.10.1200.10:FF:000001">
    <property type="entry name" value="Acyl carrier protein"/>
    <property type="match status" value="1"/>
</dbReference>
<dbReference type="Gene3D" id="1.10.1200.10">
    <property type="entry name" value="ACP-like"/>
    <property type="match status" value="1"/>
</dbReference>
<dbReference type="HAMAP" id="MF_01217">
    <property type="entry name" value="Acyl_carrier"/>
    <property type="match status" value="1"/>
</dbReference>
<dbReference type="InterPro" id="IPR003231">
    <property type="entry name" value="ACP"/>
</dbReference>
<dbReference type="InterPro" id="IPR036736">
    <property type="entry name" value="ACP-like_sf"/>
</dbReference>
<dbReference type="InterPro" id="IPR009081">
    <property type="entry name" value="PP-bd_ACP"/>
</dbReference>
<dbReference type="InterPro" id="IPR006162">
    <property type="entry name" value="Ppantetheine_attach_site"/>
</dbReference>
<dbReference type="NCBIfam" id="TIGR00517">
    <property type="entry name" value="acyl_carrier"/>
    <property type="match status" value="1"/>
</dbReference>
<dbReference type="NCBIfam" id="NF002148">
    <property type="entry name" value="PRK00982.1-2"/>
    <property type="match status" value="1"/>
</dbReference>
<dbReference type="NCBIfam" id="NF002149">
    <property type="entry name" value="PRK00982.1-3"/>
    <property type="match status" value="1"/>
</dbReference>
<dbReference type="NCBIfam" id="NF002150">
    <property type="entry name" value="PRK00982.1-4"/>
    <property type="match status" value="1"/>
</dbReference>
<dbReference type="NCBIfam" id="NF002151">
    <property type="entry name" value="PRK00982.1-5"/>
    <property type="match status" value="1"/>
</dbReference>
<dbReference type="PANTHER" id="PTHR20863">
    <property type="entry name" value="ACYL CARRIER PROTEIN"/>
    <property type="match status" value="1"/>
</dbReference>
<dbReference type="PANTHER" id="PTHR20863:SF76">
    <property type="entry name" value="CARRIER DOMAIN-CONTAINING PROTEIN"/>
    <property type="match status" value="1"/>
</dbReference>
<dbReference type="Pfam" id="PF00550">
    <property type="entry name" value="PP-binding"/>
    <property type="match status" value="1"/>
</dbReference>
<dbReference type="SUPFAM" id="SSF47336">
    <property type="entry name" value="ACP-like"/>
    <property type="match status" value="1"/>
</dbReference>
<dbReference type="PROSITE" id="PS50075">
    <property type="entry name" value="CARRIER"/>
    <property type="match status" value="1"/>
</dbReference>
<dbReference type="PROSITE" id="PS00012">
    <property type="entry name" value="PHOSPHOPANTETHEINE"/>
    <property type="match status" value="1"/>
</dbReference>
<evidence type="ECO:0000255" key="1">
    <source>
        <dbReference type="HAMAP-Rule" id="MF_01217"/>
    </source>
</evidence>
<evidence type="ECO:0000255" key="2">
    <source>
        <dbReference type="PROSITE-ProRule" id="PRU00258"/>
    </source>
</evidence>
<reference key="1">
    <citation type="submission" date="2008-10" db="EMBL/GenBank/DDBJ databases">
        <title>Genome sequence of Bacillus anthracis str. CDC 684.</title>
        <authorList>
            <person name="Dodson R.J."/>
            <person name="Munk A.C."/>
            <person name="Brettin T."/>
            <person name="Bruce D."/>
            <person name="Detter C."/>
            <person name="Tapia R."/>
            <person name="Han C."/>
            <person name="Sutton G."/>
            <person name="Sims D."/>
        </authorList>
    </citation>
    <scope>NUCLEOTIDE SEQUENCE [LARGE SCALE GENOMIC DNA]</scope>
    <source>
        <strain>CDC 684 / NRRL 3495</strain>
    </source>
</reference>
<name>ACP_BACAC</name>
<sequence>MADVLERVTKIIVDRLGVEETEVVPAASFKEDLGADSLDVVELVMQLEDEFEMEISDEDAEKIATVGDAVTYIESHL</sequence>
<protein>
    <recommendedName>
        <fullName evidence="1">Acyl carrier protein</fullName>
        <shortName evidence="1">ACP</shortName>
    </recommendedName>
</protein>